<comment type="function">
    <text evidence="1">Probable sugar transporter.</text>
</comment>
<comment type="subcellular location">
    <subcellularLocation>
        <location evidence="3">Endoplasmic reticulum membrane</location>
        <topology evidence="3">Multi-pass membrane protein</topology>
    </subcellularLocation>
</comment>
<comment type="domain">
    <text evidence="1">The di-lysine motif confers endoplasmic reticulum localization for type I membrane proteins.</text>
</comment>
<comment type="similarity">
    <text evidence="3">Belongs to the nucleotide-sugar transporter family. SLC35B subfamily.</text>
</comment>
<organism>
    <name type="scientific">Gallus gallus</name>
    <name type="common">Chicken</name>
    <dbReference type="NCBI Taxonomy" id="9031"/>
    <lineage>
        <taxon>Eukaryota</taxon>
        <taxon>Metazoa</taxon>
        <taxon>Chordata</taxon>
        <taxon>Craniata</taxon>
        <taxon>Vertebrata</taxon>
        <taxon>Euteleostomi</taxon>
        <taxon>Archelosauria</taxon>
        <taxon>Archosauria</taxon>
        <taxon>Dinosauria</taxon>
        <taxon>Saurischia</taxon>
        <taxon>Theropoda</taxon>
        <taxon>Coelurosauria</taxon>
        <taxon>Aves</taxon>
        <taxon>Neognathae</taxon>
        <taxon>Galloanserae</taxon>
        <taxon>Galliformes</taxon>
        <taxon>Phasianidae</taxon>
        <taxon>Phasianinae</taxon>
        <taxon>Gallus</taxon>
    </lineage>
</organism>
<sequence length="325" mass="36054">MGANAGRRSRSPERLRLPVCFLGVFACYFYYGILQESITRGKYGDGARQEKFTFALSLVFIQCVINAAFAKLLIRFFDSVRADRTHSWLYAACSLSYLGAMVSSNSALQFVNYPTQVLGKSCKPIPVMLLGVTVLRKKYPLAKYLCVLLIVTGVALFMYKPKKGAGGDDHIFGYGELLLLLSLTLDGLTGVSQDHMRAHYQTGSNHMMLNVNLWSTLFLGAGILFTGELWEFLSFTERYPSIIYNILLFGLTSALGQSFIFMTVVYFGPLTCSIITTTRKFFTILASVILFANPISTMQWVGTVLVFLGLGLDAKFGKGVKKTSH</sequence>
<accession>Q8AWB6</accession>
<evidence type="ECO:0000250" key="1"/>
<evidence type="ECO:0000255" key="2"/>
<evidence type="ECO:0000305" key="3"/>
<gene>
    <name type="primary">SLC35B1</name>
    <name type="synonym">ERNST1</name>
</gene>
<keyword id="KW-0256">Endoplasmic reticulum</keyword>
<keyword id="KW-0472">Membrane</keyword>
<keyword id="KW-1185">Reference proteome</keyword>
<keyword id="KW-0762">Sugar transport</keyword>
<keyword id="KW-0812">Transmembrane</keyword>
<keyword id="KW-1133">Transmembrane helix</keyword>
<keyword id="KW-0813">Transport</keyword>
<feature type="chain" id="PRO_0000213369" description="Solute carrier family 35 member B1">
    <location>
        <begin position="1"/>
        <end position="325"/>
    </location>
</feature>
<feature type="transmembrane region" description="Helical" evidence="2">
    <location>
        <begin position="18"/>
        <end position="38"/>
    </location>
</feature>
<feature type="transmembrane region" description="Helical" evidence="2">
    <location>
        <begin position="54"/>
        <end position="74"/>
    </location>
</feature>
<feature type="transmembrane region" description="Helical" evidence="2">
    <location>
        <begin position="88"/>
        <end position="108"/>
    </location>
</feature>
<feature type="transmembrane region" description="Helical" evidence="2">
    <location>
        <begin position="139"/>
        <end position="159"/>
    </location>
</feature>
<feature type="transmembrane region" description="Helical" evidence="2">
    <location>
        <begin position="171"/>
        <end position="191"/>
    </location>
</feature>
<feature type="transmembrane region" description="Helical" evidence="2">
    <location>
        <begin position="213"/>
        <end position="233"/>
    </location>
</feature>
<feature type="transmembrane region" description="Helical" evidence="2">
    <location>
        <begin position="246"/>
        <end position="266"/>
    </location>
</feature>
<feature type="transmembrane region" description="Helical" evidence="2">
    <location>
        <begin position="288"/>
        <end position="308"/>
    </location>
</feature>
<feature type="short sequence motif" description="Di-lysine motif">
    <location>
        <begin position="321"/>
        <end position="325"/>
    </location>
</feature>
<proteinExistence type="evidence at transcript level"/>
<name>S35B1_CHICK</name>
<protein>
    <recommendedName>
        <fullName>Solute carrier family 35 member B1</fullName>
    </recommendedName>
    <alternativeName>
        <fullName>Endoplasmic reticulum nucleotide sugar transporter 1</fullName>
    </alternativeName>
</protein>
<dbReference type="EMBL" id="AJ535485">
    <property type="protein sequence ID" value="CAD59550.1"/>
    <property type="molecule type" value="mRNA"/>
</dbReference>
<dbReference type="SMR" id="Q8AWB6"/>
<dbReference type="FunCoup" id="Q8AWB6">
    <property type="interactions" value="2391"/>
</dbReference>
<dbReference type="STRING" id="9031.ENSGALP00000051700"/>
<dbReference type="PaxDb" id="9031-ENSGALP00000016142"/>
<dbReference type="VEuPathDB" id="HostDB:geneid_395185"/>
<dbReference type="eggNOG" id="KOG1580">
    <property type="taxonomic scope" value="Eukaryota"/>
</dbReference>
<dbReference type="InParanoid" id="Q8AWB6"/>
<dbReference type="OrthoDB" id="78344at2759"/>
<dbReference type="PhylomeDB" id="Q8AWB6"/>
<dbReference type="Proteomes" id="UP000000539">
    <property type="component" value="Unassembled WGS sequence"/>
</dbReference>
<dbReference type="GO" id="GO:0005789">
    <property type="term" value="C:endoplasmic reticulum membrane"/>
    <property type="evidence" value="ECO:0000318"/>
    <property type="project" value="GO_Central"/>
</dbReference>
<dbReference type="GO" id="GO:0000139">
    <property type="term" value="C:Golgi membrane"/>
    <property type="evidence" value="ECO:0000318"/>
    <property type="project" value="GO_Central"/>
</dbReference>
<dbReference type="GO" id="GO:0005459">
    <property type="term" value="F:UDP-galactose transmembrane transporter activity"/>
    <property type="evidence" value="ECO:0000318"/>
    <property type="project" value="GO_Central"/>
</dbReference>
<dbReference type="GO" id="GO:0005460">
    <property type="term" value="F:UDP-glucose transmembrane transporter activity"/>
    <property type="evidence" value="ECO:0000318"/>
    <property type="project" value="GO_Central"/>
</dbReference>
<dbReference type="GO" id="GO:0072334">
    <property type="term" value="P:UDP-galactose transmembrane transport"/>
    <property type="evidence" value="ECO:0000318"/>
    <property type="project" value="GO_Central"/>
</dbReference>
<dbReference type="InterPro" id="IPR013657">
    <property type="entry name" value="SCL35B1-4/HUT1"/>
</dbReference>
<dbReference type="PANTHER" id="PTHR10778">
    <property type="entry name" value="SOLUTE CARRIER FAMILY 35 MEMBER B"/>
    <property type="match status" value="1"/>
</dbReference>
<dbReference type="PANTHER" id="PTHR10778:SF10">
    <property type="entry name" value="SOLUTE CARRIER FAMILY 35 MEMBER B1"/>
    <property type="match status" value="1"/>
</dbReference>
<dbReference type="Pfam" id="PF08449">
    <property type="entry name" value="UAA"/>
    <property type="match status" value="1"/>
</dbReference>
<dbReference type="SUPFAM" id="SSF103481">
    <property type="entry name" value="Multidrug resistance efflux transporter EmrE"/>
    <property type="match status" value="2"/>
</dbReference>
<reference key="1">
    <citation type="journal article" date="2003" name="Biochimie">
        <title>The nucleotide-sugar transporter family: a phylogenetic approach.</title>
        <authorList>
            <person name="Martinez-Duncker I."/>
            <person name="Mollicone R."/>
            <person name="Codogno P."/>
            <person name="Oriol R."/>
        </authorList>
    </citation>
    <scope>NUCLEOTIDE SEQUENCE [MRNA]</scope>
    <scope>GENE FAMILY</scope>
</reference>